<protein>
    <recommendedName>
        <fullName evidence="1">Small ribosomal subunit protein uS5</fullName>
    </recommendedName>
    <alternativeName>
        <fullName evidence="2">30S ribosomal protein S5</fullName>
    </alternativeName>
</protein>
<gene>
    <name evidence="1" type="primary">rpsE</name>
    <name type="ordered locus">Bamb_0284</name>
</gene>
<keyword id="KW-0687">Ribonucleoprotein</keyword>
<keyword id="KW-0689">Ribosomal protein</keyword>
<keyword id="KW-0694">RNA-binding</keyword>
<keyword id="KW-0699">rRNA-binding</keyword>
<evidence type="ECO:0000255" key="1">
    <source>
        <dbReference type="HAMAP-Rule" id="MF_01307"/>
    </source>
</evidence>
<evidence type="ECO:0000305" key="2"/>
<name>RS5_BURCM</name>
<sequence>MAKMQAKVQADERDDGLREKMISVNRVTKVVKGGRILGFAALTVVGDGDGRIGMGKGKAKEVPVAVQKAMEQARRNMFKVPLKNGTLQHEVHGKHGASAVLLAPAKAGTGVIAGGPMRAVFDVMGVQNVVAKSHGSTNPYNLVRATLDGLRKQSTPADIAAKRGKSVEDILG</sequence>
<reference key="1">
    <citation type="submission" date="2006-08" db="EMBL/GenBank/DDBJ databases">
        <title>Complete sequence of chromosome 1 of Burkholderia cepacia AMMD.</title>
        <authorList>
            <person name="Copeland A."/>
            <person name="Lucas S."/>
            <person name="Lapidus A."/>
            <person name="Barry K."/>
            <person name="Detter J.C."/>
            <person name="Glavina del Rio T."/>
            <person name="Hammon N."/>
            <person name="Israni S."/>
            <person name="Pitluck S."/>
            <person name="Bruce D."/>
            <person name="Chain P."/>
            <person name="Malfatti S."/>
            <person name="Shin M."/>
            <person name="Vergez L."/>
            <person name="Schmutz J."/>
            <person name="Larimer F."/>
            <person name="Land M."/>
            <person name="Hauser L."/>
            <person name="Kyrpides N."/>
            <person name="Kim E."/>
            <person name="Parke J."/>
            <person name="Coenye T."/>
            <person name="Konstantinidis K."/>
            <person name="Ramette A."/>
            <person name="Tiedje J."/>
            <person name="Richardson P."/>
        </authorList>
    </citation>
    <scope>NUCLEOTIDE SEQUENCE [LARGE SCALE GENOMIC DNA]</scope>
    <source>
        <strain>ATCC BAA-244 / DSM 16087 / CCUG 44356 / LMG 19182 / AMMD</strain>
    </source>
</reference>
<proteinExistence type="inferred from homology"/>
<feature type="chain" id="PRO_0000323086" description="Small ribosomal subunit protein uS5">
    <location>
        <begin position="1"/>
        <end position="172"/>
    </location>
</feature>
<feature type="domain" description="S5 DRBM" evidence="1">
    <location>
        <begin position="17"/>
        <end position="80"/>
    </location>
</feature>
<organism>
    <name type="scientific">Burkholderia ambifaria (strain ATCC BAA-244 / DSM 16087 / CCUG 44356 / LMG 19182 / AMMD)</name>
    <name type="common">Burkholderia cepacia (strain AMMD)</name>
    <dbReference type="NCBI Taxonomy" id="339670"/>
    <lineage>
        <taxon>Bacteria</taxon>
        <taxon>Pseudomonadati</taxon>
        <taxon>Pseudomonadota</taxon>
        <taxon>Betaproteobacteria</taxon>
        <taxon>Burkholderiales</taxon>
        <taxon>Burkholderiaceae</taxon>
        <taxon>Burkholderia</taxon>
        <taxon>Burkholderia cepacia complex</taxon>
    </lineage>
</organism>
<accession>Q0BJ29</accession>
<comment type="function">
    <text evidence="1">With S4 and S12 plays an important role in translational accuracy.</text>
</comment>
<comment type="function">
    <text evidence="1">Located at the back of the 30S subunit body where it stabilizes the conformation of the head with respect to the body.</text>
</comment>
<comment type="subunit">
    <text evidence="1">Part of the 30S ribosomal subunit. Contacts proteins S4 and S8.</text>
</comment>
<comment type="domain">
    <text>The N-terminal domain interacts with the head of the 30S subunit; the C-terminal domain interacts with the body and contacts protein S4. The interaction surface between S4 and S5 is involved in control of translational fidelity.</text>
</comment>
<comment type="similarity">
    <text evidence="1">Belongs to the universal ribosomal protein uS5 family.</text>
</comment>
<dbReference type="EMBL" id="CP000440">
    <property type="protein sequence ID" value="ABI85844.1"/>
    <property type="molecule type" value="Genomic_DNA"/>
</dbReference>
<dbReference type="RefSeq" id="WP_006752931.1">
    <property type="nucleotide sequence ID" value="NZ_CP009798.1"/>
</dbReference>
<dbReference type="SMR" id="Q0BJ29"/>
<dbReference type="GeneID" id="98107143"/>
<dbReference type="KEGG" id="bam:Bamb_0284"/>
<dbReference type="PATRIC" id="fig|339670.21.peg.1336"/>
<dbReference type="eggNOG" id="COG0098">
    <property type="taxonomic scope" value="Bacteria"/>
</dbReference>
<dbReference type="Proteomes" id="UP000000662">
    <property type="component" value="Chromosome 1"/>
</dbReference>
<dbReference type="GO" id="GO:0015935">
    <property type="term" value="C:small ribosomal subunit"/>
    <property type="evidence" value="ECO:0007669"/>
    <property type="project" value="InterPro"/>
</dbReference>
<dbReference type="GO" id="GO:0019843">
    <property type="term" value="F:rRNA binding"/>
    <property type="evidence" value="ECO:0007669"/>
    <property type="project" value="UniProtKB-UniRule"/>
</dbReference>
<dbReference type="GO" id="GO:0003735">
    <property type="term" value="F:structural constituent of ribosome"/>
    <property type="evidence" value="ECO:0007669"/>
    <property type="project" value="InterPro"/>
</dbReference>
<dbReference type="GO" id="GO:0006412">
    <property type="term" value="P:translation"/>
    <property type="evidence" value="ECO:0007669"/>
    <property type="project" value="UniProtKB-UniRule"/>
</dbReference>
<dbReference type="FunFam" id="3.30.160.20:FF:000001">
    <property type="entry name" value="30S ribosomal protein S5"/>
    <property type="match status" value="1"/>
</dbReference>
<dbReference type="FunFam" id="3.30.230.10:FF:000002">
    <property type="entry name" value="30S ribosomal protein S5"/>
    <property type="match status" value="1"/>
</dbReference>
<dbReference type="Gene3D" id="3.30.160.20">
    <property type="match status" value="1"/>
</dbReference>
<dbReference type="Gene3D" id="3.30.230.10">
    <property type="match status" value="1"/>
</dbReference>
<dbReference type="HAMAP" id="MF_01307_B">
    <property type="entry name" value="Ribosomal_uS5_B"/>
    <property type="match status" value="1"/>
</dbReference>
<dbReference type="InterPro" id="IPR020568">
    <property type="entry name" value="Ribosomal_Su5_D2-typ_SF"/>
</dbReference>
<dbReference type="InterPro" id="IPR000851">
    <property type="entry name" value="Ribosomal_uS5"/>
</dbReference>
<dbReference type="InterPro" id="IPR005712">
    <property type="entry name" value="Ribosomal_uS5_bac-type"/>
</dbReference>
<dbReference type="InterPro" id="IPR005324">
    <property type="entry name" value="Ribosomal_uS5_C"/>
</dbReference>
<dbReference type="InterPro" id="IPR013810">
    <property type="entry name" value="Ribosomal_uS5_N"/>
</dbReference>
<dbReference type="InterPro" id="IPR018192">
    <property type="entry name" value="Ribosomal_uS5_N_CS"/>
</dbReference>
<dbReference type="InterPro" id="IPR014721">
    <property type="entry name" value="Ribsml_uS5_D2-typ_fold_subgr"/>
</dbReference>
<dbReference type="NCBIfam" id="TIGR01021">
    <property type="entry name" value="rpsE_bact"/>
    <property type="match status" value="1"/>
</dbReference>
<dbReference type="PANTHER" id="PTHR48277">
    <property type="entry name" value="MITOCHONDRIAL RIBOSOMAL PROTEIN S5"/>
    <property type="match status" value="1"/>
</dbReference>
<dbReference type="PANTHER" id="PTHR48277:SF1">
    <property type="entry name" value="MITOCHONDRIAL RIBOSOMAL PROTEIN S5"/>
    <property type="match status" value="1"/>
</dbReference>
<dbReference type="Pfam" id="PF00333">
    <property type="entry name" value="Ribosomal_S5"/>
    <property type="match status" value="1"/>
</dbReference>
<dbReference type="Pfam" id="PF03719">
    <property type="entry name" value="Ribosomal_S5_C"/>
    <property type="match status" value="1"/>
</dbReference>
<dbReference type="SUPFAM" id="SSF54768">
    <property type="entry name" value="dsRNA-binding domain-like"/>
    <property type="match status" value="1"/>
</dbReference>
<dbReference type="SUPFAM" id="SSF54211">
    <property type="entry name" value="Ribosomal protein S5 domain 2-like"/>
    <property type="match status" value="1"/>
</dbReference>
<dbReference type="PROSITE" id="PS00585">
    <property type="entry name" value="RIBOSOMAL_S5"/>
    <property type="match status" value="1"/>
</dbReference>
<dbReference type="PROSITE" id="PS50881">
    <property type="entry name" value="S5_DSRBD"/>
    <property type="match status" value="1"/>
</dbReference>